<dbReference type="EC" id="1.13.11.93" evidence="1"/>
<dbReference type="EMBL" id="AE000516">
    <property type="protein sequence ID" value="AAK47734.1"/>
    <property type="molecule type" value="Genomic_DNA"/>
</dbReference>
<dbReference type="PIR" id="E70981">
    <property type="entry name" value="E70981"/>
</dbReference>
<dbReference type="RefSeq" id="WP_003417184.1">
    <property type="nucleotide sequence ID" value="NZ_KK341227.1"/>
</dbReference>
<dbReference type="SMR" id="P9WL00"/>
<dbReference type="KEGG" id="mtc:MT3391"/>
<dbReference type="PATRIC" id="fig|83331.31.peg.3649"/>
<dbReference type="HOGENOM" id="CLU_026640_0_0_11"/>
<dbReference type="Proteomes" id="UP000001020">
    <property type="component" value="Chromosome"/>
</dbReference>
<dbReference type="GO" id="GO:0051213">
    <property type="term" value="F:dioxygenase activity"/>
    <property type="evidence" value="ECO:0007669"/>
    <property type="project" value="UniProtKB-KW"/>
</dbReference>
<dbReference type="GO" id="GO:0046872">
    <property type="term" value="F:metal ion binding"/>
    <property type="evidence" value="ECO:0007669"/>
    <property type="project" value="UniProtKB-KW"/>
</dbReference>
<dbReference type="CDD" id="cd16348">
    <property type="entry name" value="VOC_YdcJ_like"/>
    <property type="match status" value="1"/>
</dbReference>
<dbReference type="Gene3D" id="3.10.180.80">
    <property type="entry name" value="Uncharacterised protein PF07063, DUF1338"/>
    <property type="match status" value="1"/>
</dbReference>
<dbReference type="InterPro" id="IPR009770">
    <property type="entry name" value="HGLS"/>
</dbReference>
<dbReference type="InterPro" id="IPR047869">
    <property type="entry name" value="YdcJ_bac-like"/>
</dbReference>
<dbReference type="PANTHER" id="PTHR39479">
    <property type="match status" value="1"/>
</dbReference>
<dbReference type="PANTHER" id="PTHR39479:SF2">
    <property type="entry name" value="2-OXOADIPATE DIOXYGENASE_DECARBOXYLASE"/>
    <property type="match status" value="1"/>
</dbReference>
<dbReference type="Pfam" id="PF07063">
    <property type="entry name" value="HGLS"/>
    <property type="match status" value="1"/>
</dbReference>
<dbReference type="SMART" id="SM01150">
    <property type="entry name" value="DUF1338"/>
    <property type="match status" value="1"/>
</dbReference>
<name>HGLS_MYCTO</name>
<accession>P9WL00</accession>
<accession>L0TDQ3</accession>
<accession>P65065</accession>
<accession>P96897</accession>
<organism>
    <name type="scientific">Mycobacterium tuberculosis (strain CDC 1551 / Oshkosh)</name>
    <dbReference type="NCBI Taxonomy" id="83331"/>
    <lineage>
        <taxon>Bacteria</taxon>
        <taxon>Bacillati</taxon>
        <taxon>Actinomycetota</taxon>
        <taxon>Actinomycetes</taxon>
        <taxon>Mycobacteriales</taxon>
        <taxon>Mycobacteriaceae</taxon>
        <taxon>Mycobacterium</taxon>
        <taxon>Mycobacterium tuberculosis complex</taxon>
    </lineage>
</organism>
<protein>
    <recommendedName>
        <fullName evidence="1">2-oxoadipate dioxygenase/decarboxylase</fullName>
        <ecNumber evidence="1">1.13.11.93</ecNumber>
    </recommendedName>
    <alternativeName>
        <fullName evidence="1">2-hydroxyglutarate synthase</fullName>
    </alternativeName>
</protein>
<comment type="function">
    <text evidence="1">Catalyzes the decarboxylation and hydroxylation of 2-oxoadipate (2OA) to form D-2-hydroxyglutarate (D-2-HGA).</text>
</comment>
<comment type="catalytic activity">
    <reaction evidence="1">
        <text>2-oxoadipate + O2 = (R)-2-hydroxyglutarate + CO2</text>
        <dbReference type="Rhea" id="RHEA:71787"/>
        <dbReference type="ChEBI" id="CHEBI:15379"/>
        <dbReference type="ChEBI" id="CHEBI:15801"/>
        <dbReference type="ChEBI" id="CHEBI:16526"/>
        <dbReference type="ChEBI" id="CHEBI:57499"/>
        <dbReference type="EC" id="1.13.11.93"/>
    </reaction>
</comment>
<comment type="cofactor">
    <cofactor evidence="1">
        <name>Fe(2+)</name>
        <dbReference type="ChEBI" id="CHEBI:29033"/>
    </cofactor>
</comment>
<comment type="similarity">
    <text evidence="2">Belongs to the 2-oxoadipate dioxygenase/decarboxylase family.</text>
</comment>
<reference key="1">
    <citation type="journal article" date="2002" name="J. Bacteriol.">
        <title>Whole-genome comparison of Mycobacterium tuberculosis clinical and laboratory strains.</title>
        <authorList>
            <person name="Fleischmann R.D."/>
            <person name="Alland D."/>
            <person name="Eisen J.A."/>
            <person name="Carpenter L."/>
            <person name="White O."/>
            <person name="Peterson J.D."/>
            <person name="DeBoy R.T."/>
            <person name="Dodson R.J."/>
            <person name="Gwinn M.L."/>
            <person name="Haft D.H."/>
            <person name="Hickey E.K."/>
            <person name="Kolonay J.F."/>
            <person name="Nelson W.C."/>
            <person name="Umayam L.A."/>
            <person name="Ermolaeva M.D."/>
            <person name="Salzberg S.L."/>
            <person name="Delcher A."/>
            <person name="Utterback T.R."/>
            <person name="Weidman J.F."/>
            <person name="Khouri H.M."/>
            <person name="Gill J."/>
            <person name="Mikula A."/>
            <person name="Bishai W."/>
            <person name="Jacobs W.R. Jr."/>
            <person name="Venter J.C."/>
            <person name="Fraser C.M."/>
        </authorList>
    </citation>
    <scope>NUCLEOTIDE SEQUENCE [LARGE SCALE GENOMIC DNA]</scope>
    <source>
        <strain>CDC 1551 / Oshkosh</strain>
    </source>
</reference>
<feature type="chain" id="PRO_0000427565" description="2-oxoadipate dioxygenase/decarboxylase">
    <location>
        <begin position="1"/>
        <end position="415"/>
    </location>
</feature>
<feature type="binding site" evidence="1">
    <location>
        <position position="66"/>
    </location>
    <ligand>
        <name>2-oxoadipate</name>
        <dbReference type="ChEBI" id="CHEBI:57499"/>
    </ligand>
</feature>
<feature type="binding site" evidence="1">
    <location>
        <position position="66"/>
    </location>
    <ligand>
        <name>Fe(2+)</name>
        <dbReference type="ChEBI" id="CHEBI:29033"/>
    </ligand>
</feature>
<feature type="binding site" evidence="1">
    <location>
        <position position="70"/>
    </location>
    <ligand>
        <name>2-oxoadipate</name>
        <dbReference type="ChEBI" id="CHEBI:57499"/>
    </ligand>
</feature>
<feature type="binding site" evidence="1">
    <location>
        <position position="225"/>
    </location>
    <ligand>
        <name>2-oxoadipate</name>
        <dbReference type="ChEBI" id="CHEBI:57499"/>
    </ligand>
</feature>
<feature type="binding site" evidence="1">
    <location>
        <position position="225"/>
    </location>
    <ligand>
        <name>Fe(2+)</name>
        <dbReference type="ChEBI" id="CHEBI:29033"/>
    </ligand>
</feature>
<feature type="binding site" evidence="1">
    <location>
        <position position="296"/>
    </location>
    <ligand>
        <name>Fe(2+)</name>
        <dbReference type="ChEBI" id="CHEBI:29033"/>
    </ligand>
</feature>
<feature type="binding site" evidence="1">
    <location>
        <position position="361"/>
    </location>
    <ligand>
        <name>2-oxoadipate</name>
        <dbReference type="ChEBI" id="CHEBI:57499"/>
    </ligand>
</feature>
<feature type="site" description="Important for substrate specificity" evidence="1">
    <location>
        <position position="70"/>
    </location>
</feature>
<sequence>MSRSKRLQTGQLRARFAAGLSAMYAAEVPAYGTLVEVCAQVNSDYLTRHRRAERLGSLQRVTAERHGAIRVGNPAELAAVADLFAAFGMLPVGYYDLRTAESPIPVVSTAFRPIDANELAHNPFRVFTSMLAIEDRRYFDADLRTRVQTFLARRQLFDPALLAQARAIAADGGCDADDAPAFVAAAVAAFALSREPVEKSWYDELSRVSAVAADIAGVGSTHINHLTPRVLDIDDLYRRMTERGITMIDTIQGPPRTDGPDVLLRQTSFRALAEPRMFRDEDGTVTPGILRVRFGEVEARGVALTPRGRERYEAAMAAADPAAVWATHFPSTDAEMAAQGLAYYRGGDPSAPIVYEDFLPASAAGIFRSNLDRDSQTGDGPDDAGYNVDWLAGAIGRHIHDPYALYDALAQEERR</sequence>
<evidence type="ECO:0000250" key="1">
    <source>
        <dbReference type="UniProtKB" id="Q88CC1"/>
    </source>
</evidence>
<evidence type="ECO:0000305" key="2"/>
<keyword id="KW-0223">Dioxygenase</keyword>
<keyword id="KW-0408">Iron</keyword>
<keyword id="KW-0479">Metal-binding</keyword>
<keyword id="KW-0560">Oxidoreductase</keyword>
<keyword id="KW-1185">Reference proteome</keyword>
<gene>
    <name type="ordered locus">MT3391</name>
</gene>
<proteinExistence type="inferred from homology"/>